<name>PYRG_LACJO</name>
<sequence length="540" mass="60519">MTKYIFVTGGVVSSLGKGISASSLGRLLKNRGLKVTMQKFDPYINIDPGTMNPYQHGEVYVTDDGTEADLDLGHYERIVDVRTSKYSNVTTGKIYQEVLDKERRGDYHGATVQVIPHITDMIKKKIMRAALTTDSDVIISEIGGTVGDIESTPFMEAIRQMRREVGEENVMYIHCTLVPYLHAAHEMKTKPTQHSVAELRSIGIQPNMLVLRAEKPIAQELKNKISTFTDVPVDRIIESIDAPSLFDLPLAFQAQGMDQKVCDFLHLESPKPEADMEAWKKLDERAKNLKNETTITLVGKYVELEDAYISVTDALQHAGYLYDTKIKVNKVQAEDITEDNIAEIMKDSDGLIVPGGFGTRGLEGMITSIKYAREHDIPFLGICLGMQMASVEFARNVLGLKDANSAEANPDTKNNIIDIMADKRDEENIGGTLRLGLYPATLKKGTKTREAYDDQDVIQERHRHRYEFNNEYREAFEKAGMVFSGVSPDNHLVEIIEIPNKKFFIAAQYHPEFLSRPQRPEGLFKAFIGAASGLPAQHFN</sequence>
<organism>
    <name type="scientific">Lactobacillus johnsonii (strain CNCM I-12250 / La1 / NCC 533)</name>
    <dbReference type="NCBI Taxonomy" id="257314"/>
    <lineage>
        <taxon>Bacteria</taxon>
        <taxon>Bacillati</taxon>
        <taxon>Bacillota</taxon>
        <taxon>Bacilli</taxon>
        <taxon>Lactobacillales</taxon>
        <taxon>Lactobacillaceae</taxon>
        <taxon>Lactobacillus</taxon>
    </lineage>
</organism>
<gene>
    <name evidence="1" type="primary">pyrG</name>
    <name type="ordered locus">LJ_0224</name>
</gene>
<proteinExistence type="inferred from homology"/>
<feature type="chain" id="PRO_0000266140" description="CTP synthase">
    <location>
        <begin position="1"/>
        <end position="540"/>
    </location>
</feature>
<feature type="domain" description="Glutamine amidotransferase type-1" evidence="1">
    <location>
        <begin position="294"/>
        <end position="537"/>
    </location>
</feature>
<feature type="region of interest" description="Amidoligase domain" evidence="1">
    <location>
        <begin position="1"/>
        <end position="267"/>
    </location>
</feature>
<feature type="active site" description="Nucleophile; for glutamine hydrolysis" evidence="1">
    <location>
        <position position="383"/>
    </location>
</feature>
<feature type="active site" evidence="1">
    <location>
        <position position="510"/>
    </location>
</feature>
<feature type="active site" evidence="1">
    <location>
        <position position="512"/>
    </location>
</feature>
<feature type="binding site" evidence="1">
    <location>
        <position position="13"/>
    </location>
    <ligand>
        <name>CTP</name>
        <dbReference type="ChEBI" id="CHEBI:37563"/>
        <note>allosteric inhibitor</note>
    </ligand>
</feature>
<feature type="binding site" evidence="1">
    <location>
        <position position="13"/>
    </location>
    <ligand>
        <name>UTP</name>
        <dbReference type="ChEBI" id="CHEBI:46398"/>
    </ligand>
</feature>
<feature type="binding site" evidence="1">
    <location>
        <begin position="14"/>
        <end position="19"/>
    </location>
    <ligand>
        <name>ATP</name>
        <dbReference type="ChEBI" id="CHEBI:30616"/>
    </ligand>
</feature>
<feature type="binding site" evidence="1">
    <location>
        <position position="54"/>
    </location>
    <ligand>
        <name>L-glutamine</name>
        <dbReference type="ChEBI" id="CHEBI:58359"/>
    </ligand>
</feature>
<feature type="binding site" evidence="1">
    <location>
        <position position="71"/>
    </location>
    <ligand>
        <name>ATP</name>
        <dbReference type="ChEBI" id="CHEBI:30616"/>
    </ligand>
</feature>
<feature type="binding site" evidence="1">
    <location>
        <position position="71"/>
    </location>
    <ligand>
        <name>Mg(2+)</name>
        <dbReference type="ChEBI" id="CHEBI:18420"/>
    </ligand>
</feature>
<feature type="binding site" evidence="1">
    <location>
        <position position="141"/>
    </location>
    <ligand>
        <name>Mg(2+)</name>
        <dbReference type="ChEBI" id="CHEBI:18420"/>
    </ligand>
</feature>
<feature type="binding site" evidence="1">
    <location>
        <begin position="148"/>
        <end position="150"/>
    </location>
    <ligand>
        <name>CTP</name>
        <dbReference type="ChEBI" id="CHEBI:37563"/>
        <note>allosteric inhibitor</note>
    </ligand>
</feature>
<feature type="binding site" evidence="1">
    <location>
        <begin position="188"/>
        <end position="193"/>
    </location>
    <ligand>
        <name>CTP</name>
        <dbReference type="ChEBI" id="CHEBI:37563"/>
        <note>allosteric inhibitor</note>
    </ligand>
</feature>
<feature type="binding site" evidence="1">
    <location>
        <begin position="188"/>
        <end position="193"/>
    </location>
    <ligand>
        <name>UTP</name>
        <dbReference type="ChEBI" id="CHEBI:46398"/>
    </ligand>
</feature>
<feature type="binding site" evidence="1">
    <location>
        <position position="224"/>
    </location>
    <ligand>
        <name>CTP</name>
        <dbReference type="ChEBI" id="CHEBI:37563"/>
        <note>allosteric inhibitor</note>
    </ligand>
</feature>
<feature type="binding site" evidence="1">
    <location>
        <position position="224"/>
    </location>
    <ligand>
        <name>UTP</name>
        <dbReference type="ChEBI" id="CHEBI:46398"/>
    </ligand>
</feature>
<feature type="binding site" evidence="1">
    <location>
        <position position="356"/>
    </location>
    <ligand>
        <name>L-glutamine</name>
        <dbReference type="ChEBI" id="CHEBI:58359"/>
    </ligand>
</feature>
<feature type="binding site" evidence="1">
    <location>
        <begin position="384"/>
        <end position="387"/>
    </location>
    <ligand>
        <name>L-glutamine</name>
        <dbReference type="ChEBI" id="CHEBI:58359"/>
    </ligand>
</feature>
<feature type="binding site" evidence="1">
    <location>
        <position position="407"/>
    </location>
    <ligand>
        <name>L-glutamine</name>
        <dbReference type="ChEBI" id="CHEBI:58359"/>
    </ligand>
</feature>
<feature type="binding site" evidence="1">
    <location>
        <position position="465"/>
    </location>
    <ligand>
        <name>L-glutamine</name>
        <dbReference type="ChEBI" id="CHEBI:58359"/>
    </ligand>
</feature>
<protein>
    <recommendedName>
        <fullName evidence="1">CTP synthase</fullName>
        <ecNumber evidence="1">6.3.4.2</ecNumber>
    </recommendedName>
    <alternativeName>
        <fullName evidence="1">Cytidine 5'-triphosphate synthase</fullName>
    </alternativeName>
    <alternativeName>
        <fullName evidence="1">Cytidine triphosphate synthetase</fullName>
        <shortName evidence="1">CTP synthetase</shortName>
        <shortName evidence="1">CTPS</shortName>
    </alternativeName>
    <alternativeName>
        <fullName evidence="1">UTP--ammonia ligase</fullName>
    </alternativeName>
</protein>
<comment type="function">
    <text evidence="1">Catalyzes the ATP-dependent amination of UTP to CTP with either L-glutamine or ammonia as the source of nitrogen. Regulates intracellular CTP levels through interactions with the four ribonucleotide triphosphates.</text>
</comment>
<comment type="catalytic activity">
    <reaction evidence="1">
        <text>UTP + L-glutamine + ATP + H2O = CTP + L-glutamate + ADP + phosphate + 2 H(+)</text>
        <dbReference type="Rhea" id="RHEA:26426"/>
        <dbReference type="ChEBI" id="CHEBI:15377"/>
        <dbReference type="ChEBI" id="CHEBI:15378"/>
        <dbReference type="ChEBI" id="CHEBI:29985"/>
        <dbReference type="ChEBI" id="CHEBI:30616"/>
        <dbReference type="ChEBI" id="CHEBI:37563"/>
        <dbReference type="ChEBI" id="CHEBI:43474"/>
        <dbReference type="ChEBI" id="CHEBI:46398"/>
        <dbReference type="ChEBI" id="CHEBI:58359"/>
        <dbReference type="ChEBI" id="CHEBI:456216"/>
        <dbReference type="EC" id="6.3.4.2"/>
    </reaction>
</comment>
<comment type="catalytic activity">
    <reaction evidence="1">
        <text>L-glutamine + H2O = L-glutamate + NH4(+)</text>
        <dbReference type="Rhea" id="RHEA:15889"/>
        <dbReference type="ChEBI" id="CHEBI:15377"/>
        <dbReference type="ChEBI" id="CHEBI:28938"/>
        <dbReference type="ChEBI" id="CHEBI:29985"/>
        <dbReference type="ChEBI" id="CHEBI:58359"/>
    </reaction>
</comment>
<comment type="catalytic activity">
    <reaction evidence="1">
        <text>UTP + NH4(+) + ATP = CTP + ADP + phosphate + 2 H(+)</text>
        <dbReference type="Rhea" id="RHEA:16597"/>
        <dbReference type="ChEBI" id="CHEBI:15378"/>
        <dbReference type="ChEBI" id="CHEBI:28938"/>
        <dbReference type="ChEBI" id="CHEBI:30616"/>
        <dbReference type="ChEBI" id="CHEBI:37563"/>
        <dbReference type="ChEBI" id="CHEBI:43474"/>
        <dbReference type="ChEBI" id="CHEBI:46398"/>
        <dbReference type="ChEBI" id="CHEBI:456216"/>
    </reaction>
</comment>
<comment type="activity regulation">
    <text evidence="1">Allosterically activated by GTP, when glutamine is the substrate; GTP has no effect on the reaction when ammonia is the substrate. The allosteric effector GTP functions by stabilizing the protein conformation that binds the tetrahedral intermediate(s) formed during glutamine hydrolysis. Inhibited by the product CTP, via allosteric rather than competitive inhibition.</text>
</comment>
<comment type="pathway">
    <text evidence="1">Pyrimidine metabolism; CTP biosynthesis via de novo pathway; CTP from UDP: step 2/2.</text>
</comment>
<comment type="subunit">
    <text evidence="1">Homotetramer.</text>
</comment>
<comment type="miscellaneous">
    <text evidence="1">CTPSs have evolved a hybrid strategy for distinguishing between UTP and CTP. The overlapping regions of the product feedback inhibitory and substrate sites recognize a common feature in both compounds, the triphosphate moiety. To differentiate isosteric substrate and product pyrimidine rings, an additional pocket far from the expected kinase/ligase catalytic site, specifically recognizes the cytosine and ribose portions of the product inhibitor.</text>
</comment>
<comment type="similarity">
    <text evidence="1">Belongs to the CTP synthase family.</text>
</comment>
<dbReference type="EC" id="6.3.4.2" evidence="1"/>
<dbReference type="EMBL" id="AE017198">
    <property type="protein sequence ID" value="AAS08205.1"/>
    <property type="molecule type" value="Genomic_DNA"/>
</dbReference>
<dbReference type="RefSeq" id="WP_004898762.1">
    <property type="nucleotide sequence ID" value="NC_005362.1"/>
</dbReference>
<dbReference type="SMR" id="Q74LG2"/>
<dbReference type="MEROPS" id="C26.964"/>
<dbReference type="KEGG" id="ljo:LJ_0224"/>
<dbReference type="eggNOG" id="COG0504">
    <property type="taxonomic scope" value="Bacteria"/>
</dbReference>
<dbReference type="HOGENOM" id="CLU_011675_5_0_9"/>
<dbReference type="UniPathway" id="UPA00159">
    <property type="reaction ID" value="UER00277"/>
</dbReference>
<dbReference type="Proteomes" id="UP000000581">
    <property type="component" value="Chromosome"/>
</dbReference>
<dbReference type="GO" id="GO:0005829">
    <property type="term" value="C:cytosol"/>
    <property type="evidence" value="ECO:0007669"/>
    <property type="project" value="TreeGrafter"/>
</dbReference>
<dbReference type="GO" id="GO:0005524">
    <property type="term" value="F:ATP binding"/>
    <property type="evidence" value="ECO:0007669"/>
    <property type="project" value="UniProtKB-KW"/>
</dbReference>
<dbReference type="GO" id="GO:0003883">
    <property type="term" value="F:CTP synthase activity"/>
    <property type="evidence" value="ECO:0007669"/>
    <property type="project" value="UniProtKB-UniRule"/>
</dbReference>
<dbReference type="GO" id="GO:0004359">
    <property type="term" value="F:glutaminase activity"/>
    <property type="evidence" value="ECO:0007669"/>
    <property type="project" value="RHEA"/>
</dbReference>
<dbReference type="GO" id="GO:0042802">
    <property type="term" value="F:identical protein binding"/>
    <property type="evidence" value="ECO:0007669"/>
    <property type="project" value="TreeGrafter"/>
</dbReference>
<dbReference type="GO" id="GO:0046872">
    <property type="term" value="F:metal ion binding"/>
    <property type="evidence" value="ECO:0007669"/>
    <property type="project" value="UniProtKB-KW"/>
</dbReference>
<dbReference type="GO" id="GO:0044210">
    <property type="term" value="P:'de novo' CTP biosynthetic process"/>
    <property type="evidence" value="ECO:0007669"/>
    <property type="project" value="UniProtKB-UniRule"/>
</dbReference>
<dbReference type="GO" id="GO:0019856">
    <property type="term" value="P:pyrimidine nucleobase biosynthetic process"/>
    <property type="evidence" value="ECO:0007669"/>
    <property type="project" value="TreeGrafter"/>
</dbReference>
<dbReference type="CDD" id="cd03113">
    <property type="entry name" value="CTPS_N"/>
    <property type="match status" value="1"/>
</dbReference>
<dbReference type="CDD" id="cd01746">
    <property type="entry name" value="GATase1_CTP_Synthase"/>
    <property type="match status" value="1"/>
</dbReference>
<dbReference type="FunFam" id="3.40.50.300:FF:000009">
    <property type="entry name" value="CTP synthase"/>
    <property type="match status" value="1"/>
</dbReference>
<dbReference type="FunFam" id="3.40.50.880:FF:000002">
    <property type="entry name" value="CTP synthase"/>
    <property type="match status" value="1"/>
</dbReference>
<dbReference type="Gene3D" id="3.40.50.880">
    <property type="match status" value="1"/>
</dbReference>
<dbReference type="Gene3D" id="3.40.50.300">
    <property type="entry name" value="P-loop containing nucleotide triphosphate hydrolases"/>
    <property type="match status" value="1"/>
</dbReference>
<dbReference type="HAMAP" id="MF_01227">
    <property type="entry name" value="PyrG"/>
    <property type="match status" value="1"/>
</dbReference>
<dbReference type="InterPro" id="IPR029062">
    <property type="entry name" value="Class_I_gatase-like"/>
</dbReference>
<dbReference type="InterPro" id="IPR004468">
    <property type="entry name" value="CTP_synthase"/>
</dbReference>
<dbReference type="InterPro" id="IPR017456">
    <property type="entry name" value="CTP_synthase_N"/>
</dbReference>
<dbReference type="InterPro" id="IPR017926">
    <property type="entry name" value="GATASE"/>
</dbReference>
<dbReference type="InterPro" id="IPR033828">
    <property type="entry name" value="GATase1_CTP_Synthase"/>
</dbReference>
<dbReference type="InterPro" id="IPR027417">
    <property type="entry name" value="P-loop_NTPase"/>
</dbReference>
<dbReference type="NCBIfam" id="NF003792">
    <property type="entry name" value="PRK05380.1"/>
    <property type="match status" value="1"/>
</dbReference>
<dbReference type="NCBIfam" id="TIGR00337">
    <property type="entry name" value="PyrG"/>
    <property type="match status" value="1"/>
</dbReference>
<dbReference type="PANTHER" id="PTHR11550">
    <property type="entry name" value="CTP SYNTHASE"/>
    <property type="match status" value="1"/>
</dbReference>
<dbReference type="PANTHER" id="PTHR11550:SF0">
    <property type="entry name" value="CTP SYNTHASE-RELATED"/>
    <property type="match status" value="1"/>
</dbReference>
<dbReference type="Pfam" id="PF06418">
    <property type="entry name" value="CTP_synth_N"/>
    <property type="match status" value="1"/>
</dbReference>
<dbReference type="Pfam" id="PF00117">
    <property type="entry name" value="GATase"/>
    <property type="match status" value="1"/>
</dbReference>
<dbReference type="SUPFAM" id="SSF52317">
    <property type="entry name" value="Class I glutamine amidotransferase-like"/>
    <property type="match status" value="1"/>
</dbReference>
<dbReference type="SUPFAM" id="SSF52540">
    <property type="entry name" value="P-loop containing nucleoside triphosphate hydrolases"/>
    <property type="match status" value="1"/>
</dbReference>
<dbReference type="PROSITE" id="PS51273">
    <property type="entry name" value="GATASE_TYPE_1"/>
    <property type="match status" value="1"/>
</dbReference>
<accession>Q74LG2</accession>
<reference key="1">
    <citation type="journal article" date="2004" name="Proc. Natl. Acad. Sci. U.S.A.">
        <title>The genome sequence of the probiotic intestinal bacterium Lactobacillus johnsonii NCC 533.</title>
        <authorList>
            <person name="Pridmore R.D."/>
            <person name="Berger B."/>
            <person name="Desiere F."/>
            <person name="Vilanova D."/>
            <person name="Barretto C."/>
            <person name="Pittet A.-C."/>
            <person name="Zwahlen M.-C."/>
            <person name="Rouvet M."/>
            <person name="Altermann E."/>
            <person name="Barrangou R."/>
            <person name="Mollet B."/>
            <person name="Mercenier A."/>
            <person name="Klaenhammer T."/>
            <person name="Arigoni F."/>
            <person name="Schell M.A."/>
        </authorList>
    </citation>
    <scope>NUCLEOTIDE SEQUENCE [LARGE SCALE GENOMIC DNA]</scope>
    <source>
        <strain>CNCM I-1225 / La1 / NCC 533</strain>
    </source>
</reference>
<keyword id="KW-0067">ATP-binding</keyword>
<keyword id="KW-0315">Glutamine amidotransferase</keyword>
<keyword id="KW-0436">Ligase</keyword>
<keyword id="KW-0460">Magnesium</keyword>
<keyword id="KW-0479">Metal-binding</keyword>
<keyword id="KW-0547">Nucleotide-binding</keyword>
<keyword id="KW-0665">Pyrimidine biosynthesis</keyword>
<evidence type="ECO:0000255" key="1">
    <source>
        <dbReference type="HAMAP-Rule" id="MF_01227"/>
    </source>
</evidence>